<name>APT_PSEU2</name>
<sequence length="182" mass="20154">MTFDQSNFKSLIRPVVDFPKPGVVFRDITPLFQSPKATRQVIDSFVQRYIDAEFSHIGVMDARGFLIGSVVAYQLNKPLVLFRKQGKLPADVLSEAYQTEYGEAYLEVHADSLCEGDSVVMFDDLIATGGTLIAAANLIRRMGAEVYEAAAIIDLPELGGSKRLNDLKIPTFCLTEFALDEQ</sequence>
<protein>
    <recommendedName>
        <fullName evidence="1">Adenine phosphoribosyltransferase</fullName>
        <shortName evidence="1">APRT</shortName>
        <ecNumber evidence="1">2.4.2.7</ecNumber>
    </recommendedName>
</protein>
<organism>
    <name type="scientific">Pseudomonas syringae pv. syringae (strain B728a)</name>
    <dbReference type="NCBI Taxonomy" id="205918"/>
    <lineage>
        <taxon>Bacteria</taxon>
        <taxon>Pseudomonadati</taxon>
        <taxon>Pseudomonadota</taxon>
        <taxon>Gammaproteobacteria</taxon>
        <taxon>Pseudomonadales</taxon>
        <taxon>Pseudomonadaceae</taxon>
        <taxon>Pseudomonas</taxon>
        <taxon>Pseudomonas syringae</taxon>
    </lineage>
</organism>
<keyword id="KW-0963">Cytoplasm</keyword>
<keyword id="KW-0328">Glycosyltransferase</keyword>
<keyword id="KW-0660">Purine salvage</keyword>
<keyword id="KW-0808">Transferase</keyword>
<comment type="function">
    <text evidence="1">Catalyzes a salvage reaction resulting in the formation of AMP, that is energically less costly than de novo synthesis.</text>
</comment>
<comment type="catalytic activity">
    <reaction evidence="1">
        <text>AMP + diphosphate = 5-phospho-alpha-D-ribose 1-diphosphate + adenine</text>
        <dbReference type="Rhea" id="RHEA:16609"/>
        <dbReference type="ChEBI" id="CHEBI:16708"/>
        <dbReference type="ChEBI" id="CHEBI:33019"/>
        <dbReference type="ChEBI" id="CHEBI:58017"/>
        <dbReference type="ChEBI" id="CHEBI:456215"/>
        <dbReference type="EC" id="2.4.2.7"/>
    </reaction>
</comment>
<comment type="pathway">
    <text evidence="1">Purine metabolism; AMP biosynthesis via salvage pathway; AMP from adenine: step 1/1.</text>
</comment>
<comment type="subunit">
    <text evidence="1">Homodimer.</text>
</comment>
<comment type="subcellular location">
    <subcellularLocation>
        <location evidence="1">Cytoplasm</location>
    </subcellularLocation>
</comment>
<comment type="similarity">
    <text evidence="1">Belongs to the purine/pyrimidine phosphoribosyltransferase family.</text>
</comment>
<dbReference type="EC" id="2.4.2.7" evidence="1"/>
<dbReference type="EMBL" id="CP000075">
    <property type="protein sequence ID" value="AAY38458.1"/>
    <property type="molecule type" value="Genomic_DNA"/>
</dbReference>
<dbReference type="RefSeq" id="WP_003412368.1">
    <property type="nucleotide sequence ID" value="NC_007005.1"/>
</dbReference>
<dbReference type="RefSeq" id="YP_236496.1">
    <property type="nucleotide sequence ID" value="NC_007005.1"/>
</dbReference>
<dbReference type="SMR" id="Q4ZQW4"/>
<dbReference type="STRING" id="205918.Psyr_3426"/>
<dbReference type="KEGG" id="psb:Psyr_3426"/>
<dbReference type="PATRIC" id="fig|205918.7.peg.3509"/>
<dbReference type="eggNOG" id="COG0503">
    <property type="taxonomic scope" value="Bacteria"/>
</dbReference>
<dbReference type="HOGENOM" id="CLU_063339_3_0_6"/>
<dbReference type="OrthoDB" id="9803963at2"/>
<dbReference type="UniPathway" id="UPA00588">
    <property type="reaction ID" value="UER00646"/>
</dbReference>
<dbReference type="Proteomes" id="UP000000426">
    <property type="component" value="Chromosome"/>
</dbReference>
<dbReference type="GO" id="GO:0005829">
    <property type="term" value="C:cytosol"/>
    <property type="evidence" value="ECO:0007669"/>
    <property type="project" value="TreeGrafter"/>
</dbReference>
<dbReference type="GO" id="GO:0003999">
    <property type="term" value="F:adenine phosphoribosyltransferase activity"/>
    <property type="evidence" value="ECO:0007669"/>
    <property type="project" value="UniProtKB-UniRule"/>
</dbReference>
<dbReference type="GO" id="GO:0006168">
    <property type="term" value="P:adenine salvage"/>
    <property type="evidence" value="ECO:0007669"/>
    <property type="project" value="InterPro"/>
</dbReference>
<dbReference type="GO" id="GO:0044209">
    <property type="term" value="P:AMP salvage"/>
    <property type="evidence" value="ECO:0007669"/>
    <property type="project" value="UniProtKB-UniRule"/>
</dbReference>
<dbReference type="GO" id="GO:0006166">
    <property type="term" value="P:purine ribonucleoside salvage"/>
    <property type="evidence" value="ECO:0007669"/>
    <property type="project" value="UniProtKB-KW"/>
</dbReference>
<dbReference type="CDD" id="cd06223">
    <property type="entry name" value="PRTases_typeI"/>
    <property type="match status" value="1"/>
</dbReference>
<dbReference type="FunFam" id="3.40.50.2020:FF:000021">
    <property type="entry name" value="Adenine phosphoribosyltransferase"/>
    <property type="match status" value="1"/>
</dbReference>
<dbReference type="Gene3D" id="3.40.50.2020">
    <property type="match status" value="1"/>
</dbReference>
<dbReference type="HAMAP" id="MF_00004">
    <property type="entry name" value="Aden_phosphoribosyltr"/>
    <property type="match status" value="1"/>
</dbReference>
<dbReference type="InterPro" id="IPR005764">
    <property type="entry name" value="Ade_phspho_trans"/>
</dbReference>
<dbReference type="InterPro" id="IPR050120">
    <property type="entry name" value="Adenine_PRTase"/>
</dbReference>
<dbReference type="InterPro" id="IPR000836">
    <property type="entry name" value="PRibTrfase_dom"/>
</dbReference>
<dbReference type="InterPro" id="IPR029057">
    <property type="entry name" value="PRTase-like"/>
</dbReference>
<dbReference type="NCBIfam" id="TIGR01090">
    <property type="entry name" value="apt"/>
    <property type="match status" value="1"/>
</dbReference>
<dbReference type="NCBIfam" id="NF002634">
    <property type="entry name" value="PRK02304.1-3"/>
    <property type="match status" value="1"/>
</dbReference>
<dbReference type="NCBIfam" id="NF002636">
    <property type="entry name" value="PRK02304.1-5"/>
    <property type="match status" value="1"/>
</dbReference>
<dbReference type="PANTHER" id="PTHR11776">
    <property type="entry name" value="ADENINE PHOSPHORIBOSYLTRANSFERASE"/>
    <property type="match status" value="1"/>
</dbReference>
<dbReference type="PANTHER" id="PTHR11776:SF7">
    <property type="entry name" value="PHOSPHORIBOSYLTRANSFERASE DOMAIN-CONTAINING PROTEIN"/>
    <property type="match status" value="1"/>
</dbReference>
<dbReference type="Pfam" id="PF00156">
    <property type="entry name" value="Pribosyltran"/>
    <property type="match status" value="1"/>
</dbReference>
<dbReference type="SUPFAM" id="SSF53271">
    <property type="entry name" value="PRTase-like"/>
    <property type="match status" value="1"/>
</dbReference>
<dbReference type="PROSITE" id="PS00103">
    <property type="entry name" value="PUR_PYR_PR_TRANSFER"/>
    <property type="match status" value="1"/>
</dbReference>
<reference key="1">
    <citation type="journal article" date="2005" name="Proc. Natl. Acad. Sci. U.S.A.">
        <title>Comparison of the complete genome sequences of Pseudomonas syringae pv. syringae B728a and pv. tomato DC3000.</title>
        <authorList>
            <person name="Feil H."/>
            <person name="Feil W.S."/>
            <person name="Chain P."/>
            <person name="Larimer F."/>
            <person name="Dibartolo G."/>
            <person name="Copeland A."/>
            <person name="Lykidis A."/>
            <person name="Trong S."/>
            <person name="Nolan M."/>
            <person name="Goltsman E."/>
            <person name="Thiel J."/>
            <person name="Malfatti S."/>
            <person name="Loper J.E."/>
            <person name="Lapidus A."/>
            <person name="Detter J.C."/>
            <person name="Land M."/>
            <person name="Richardson P.M."/>
            <person name="Kyrpides N.C."/>
            <person name="Ivanova N."/>
            <person name="Lindow S.E."/>
        </authorList>
    </citation>
    <scope>NUCLEOTIDE SEQUENCE [LARGE SCALE GENOMIC DNA]</scope>
    <source>
        <strain>B728a</strain>
    </source>
</reference>
<evidence type="ECO:0000255" key="1">
    <source>
        <dbReference type="HAMAP-Rule" id="MF_00004"/>
    </source>
</evidence>
<gene>
    <name evidence="1" type="primary">apt</name>
    <name type="ordered locus">Psyr_3426</name>
</gene>
<feature type="chain" id="PRO_1000000330" description="Adenine phosphoribosyltransferase">
    <location>
        <begin position="1"/>
        <end position="182"/>
    </location>
</feature>
<accession>Q4ZQW4</accession>
<proteinExistence type="inferred from homology"/>